<organism>
    <name type="scientific">Salmonella enteritidis PT4 (strain P125109)</name>
    <dbReference type="NCBI Taxonomy" id="550537"/>
    <lineage>
        <taxon>Bacteria</taxon>
        <taxon>Pseudomonadati</taxon>
        <taxon>Pseudomonadota</taxon>
        <taxon>Gammaproteobacteria</taxon>
        <taxon>Enterobacterales</taxon>
        <taxon>Enterobacteriaceae</taxon>
        <taxon>Salmonella</taxon>
    </lineage>
</organism>
<dbReference type="EMBL" id="AM933172">
    <property type="protein sequence ID" value="CAR35453.1"/>
    <property type="molecule type" value="Genomic_DNA"/>
</dbReference>
<dbReference type="RefSeq" id="WP_000872918.1">
    <property type="nucleotide sequence ID" value="NC_011294.1"/>
</dbReference>
<dbReference type="SMR" id="B5QXL8"/>
<dbReference type="KEGG" id="set:SEN3879"/>
<dbReference type="HOGENOM" id="CLU_072626_4_0_6"/>
<dbReference type="Proteomes" id="UP000000613">
    <property type="component" value="Chromosome"/>
</dbReference>
<dbReference type="GO" id="GO:0005829">
    <property type="term" value="C:cytosol"/>
    <property type="evidence" value="ECO:0007669"/>
    <property type="project" value="TreeGrafter"/>
</dbReference>
<dbReference type="GO" id="GO:0060698">
    <property type="term" value="F:endoribonuclease inhibitor activity"/>
    <property type="evidence" value="ECO:0007669"/>
    <property type="project" value="UniProtKB-UniRule"/>
</dbReference>
<dbReference type="GO" id="GO:0019899">
    <property type="term" value="F:enzyme binding"/>
    <property type="evidence" value="ECO:0007669"/>
    <property type="project" value="UniProtKB-UniRule"/>
</dbReference>
<dbReference type="GO" id="GO:1902369">
    <property type="term" value="P:negative regulation of RNA catabolic process"/>
    <property type="evidence" value="ECO:0007669"/>
    <property type="project" value="TreeGrafter"/>
</dbReference>
<dbReference type="CDD" id="cd16841">
    <property type="entry name" value="RraA_family"/>
    <property type="match status" value="1"/>
</dbReference>
<dbReference type="FunFam" id="3.50.30.40:FF:000001">
    <property type="entry name" value="Regulator of ribonuclease activity A"/>
    <property type="match status" value="1"/>
</dbReference>
<dbReference type="Gene3D" id="3.50.30.40">
    <property type="entry name" value="Ribonuclease E inhibitor RraA/RraA-like"/>
    <property type="match status" value="1"/>
</dbReference>
<dbReference type="HAMAP" id="MF_00471">
    <property type="entry name" value="RraA"/>
    <property type="match status" value="1"/>
</dbReference>
<dbReference type="InterPro" id="IPR010203">
    <property type="entry name" value="RraA"/>
</dbReference>
<dbReference type="InterPro" id="IPR005493">
    <property type="entry name" value="RraA/RraA-like"/>
</dbReference>
<dbReference type="InterPro" id="IPR036704">
    <property type="entry name" value="RraA/RraA-like_sf"/>
</dbReference>
<dbReference type="InterPro" id="IPR014339">
    <property type="entry name" value="RraA_gpbac"/>
</dbReference>
<dbReference type="NCBIfam" id="TIGR01935">
    <property type="entry name" value="NOT-MenG"/>
    <property type="match status" value="1"/>
</dbReference>
<dbReference type="NCBIfam" id="NF006875">
    <property type="entry name" value="PRK09372.1"/>
    <property type="match status" value="1"/>
</dbReference>
<dbReference type="NCBIfam" id="TIGR02998">
    <property type="entry name" value="RraA_entero"/>
    <property type="match status" value="1"/>
</dbReference>
<dbReference type="PANTHER" id="PTHR33254">
    <property type="entry name" value="4-HYDROXY-4-METHYL-2-OXOGLUTARATE ALDOLASE 3-RELATED"/>
    <property type="match status" value="1"/>
</dbReference>
<dbReference type="PANTHER" id="PTHR33254:SF29">
    <property type="entry name" value="REGULATOR OF RIBONUCLEASE ACTIVITY A"/>
    <property type="match status" value="1"/>
</dbReference>
<dbReference type="Pfam" id="PF03737">
    <property type="entry name" value="RraA-like"/>
    <property type="match status" value="1"/>
</dbReference>
<dbReference type="SUPFAM" id="SSF89562">
    <property type="entry name" value="RraA-like"/>
    <property type="match status" value="1"/>
</dbReference>
<evidence type="ECO:0000255" key="1">
    <source>
        <dbReference type="HAMAP-Rule" id="MF_00471"/>
    </source>
</evidence>
<protein>
    <recommendedName>
        <fullName evidence="1">Regulator of ribonuclease activity A</fullName>
    </recommendedName>
</protein>
<name>RRAA_SALEP</name>
<sequence length="161" mass="17374">MKYDTSELCDIYQEDVNVVEPLFSNFGGRSSFGGQIITVKCFEDNGLLYDLLEQNGRGRVLLVDGGGSVRRALVDAELARLATQNEWEGLVIYGAVRQVDDLEELDIGIQAIAAIPVGAAGEGIGESDVRVNFGGVTFFSGDHLYADNTGIILSEDPLDIE</sequence>
<gene>
    <name evidence="1" type="primary">rraA</name>
    <name type="ordered locus">SEN3879</name>
</gene>
<accession>B5QXL8</accession>
<comment type="function">
    <text evidence="1">Globally modulates RNA abundance by binding to RNase E (Rne) and regulating its endonucleolytic activity. Can modulate Rne action in a substrate-dependent manner by altering the composition of the degradosome. Modulates RNA-binding and helicase activities of the degradosome.</text>
</comment>
<comment type="subunit">
    <text evidence="1">Homotrimer. Binds to both RNA-binding sites in the C-terminal region of Rne and to RhlB.</text>
</comment>
<comment type="subcellular location">
    <subcellularLocation>
        <location evidence="1">Cytoplasm</location>
    </subcellularLocation>
</comment>
<comment type="similarity">
    <text evidence="1">Belongs to the RraA family.</text>
</comment>
<feature type="chain" id="PRO_1000194873" description="Regulator of ribonuclease activity A">
    <location>
        <begin position="1"/>
        <end position="161"/>
    </location>
</feature>
<reference key="1">
    <citation type="journal article" date="2008" name="Genome Res.">
        <title>Comparative genome analysis of Salmonella enteritidis PT4 and Salmonella gallinarum 287/91 provides insights into evolutionary and host adaptation pathways.</title>
        <authorList>
            <person name="Thomson N.R."/>
            <person name="Clayton D.J."/>
            <person name="Windhorst D."/>
            <person name="Vernikos G."/>
            <person name="Davidson S."/>
            <person name="Churcher C."/>
            <person name="Quail M.A."/>
            <person name="Stevens M."/>
            <person name="Jones M.A."/>
            <person name="Watson M."/>
            <person name="Barron A."/>
            <person name="Layton A."/>
            <person name="Pickard D."/>
            <person name="Kingsley R.A."/>
            <person name="Bignell A."/>
            <person name="Clark L."/>
            <person name="Harris B."/>
            <person name="Ormond D."/>
            <person name="Abdellah Z."/>
            <person name="Brooks K."/>
            <person name="Cherevach I."/>
            <person name="Chillingworth T."/>
            <person name="Woodward J."/>
            <person name="Norberczak H."/>
            <person name="Lord A."/>
            <person name="Arrowsmith C."/>
            <person name="Jagels K."/>
            <person name="Moule S."/>
            <person name="Mungall K."/>
            <person name="Saunders M."/>
            <person name="Whitehead S."/>
            <person name="Chabalgoity J.A."/>
            <person name="Maskell D."/>
            <person name="Humphreys T."/>
            <person name="Roberts M."/>
            <person name="Barrow P.A."/>
            <person name="Dougan G."/>
            <person name="Parkhill J."/>
        </authorList>
    </citation>
    <scope>NUCLEOTIDE SEQUENCE [LARGE SCALE GENOMIC DNA]</scope>
    <source>
        <strain>P125109</strain>
    </source>
</reference>
<keyword id="KW-0963">Cytoplasm</keyword>
<proteinExistence type="inferred from homology"/>